<accession>P35614</accession>
<sequence>MADQESDKNIEIWKIKKLIKGLETARGNGTSMISLIMPPRDQVARVTKMLADEYGTASNIKSRVNRQSVLSAITSAQQRLKLYNKVPPNGLVLYTGTIVTDDGKEKKVTIDFEPFKPINASLYLCDNKFHTEPLNELLESDDKFGFIVMDGNGTLFGTLSGNTREVLHKFTVDLPKKHGRGGQSALRFARLRMEKRHNYVRKTAELATQFYINPATSQPNVSGLILAGSADFKTELSQSELFDPRLQAKILNVVDVSYGGENGFNQAIELSAEILSNVKFIQEKKLIGKYFEEISQDTGKYVFGVEDTLKALEMGAVETLIVWENLDINRYELKNNTTGEIVIKHLGKDQENNQSNFHDAETNAELEVQEKMPLLEWFANEYKRFGCTLEFVTNKSQEGSQFCRGFGGIGGLLRYQLDMRTFDELSDGEVYEDSD</sequence>
<protein>
    <recommendedName>
        <fullName>Eukaryotic peptide chain release factor subunit 1-3</fullName>
        <shortName>Eukaryotic release factor 1-3</shortName>
        <shortName>eRF1-3</shortName>
    </recommendedName>
    <alternativeName>
        <fullName>Omnipotent suppressor protein 1 homolog 3</fullName>
        <shortName>SUP1 homolog 3</shortName>
    </alternativeName>
</protein>
<organism>
    <name type="scientific">Arabidopsis thaliana</name>
    <name type="common">Mouse-ear cress</name>
    <dbReference type="NCBI Taxonomy" id="3702"/>
    <lineage>
        <taxon>Eukaryota</taxon>
        <taxon>Viridiplantae</taxon>
        <taxon>Streptophyta</taxon>
        <taxon>Embryophyta</taxon>
        <taxon>Tracheophyta</taxon>
        <taxon>Spermatophyta</taxon>
        <taxon>Magnoliopsida</taxon>
        <taxon>eudicotyledons</taxon>
        <taxon>Gunneridae</taxon>
        <taxon>Pentapetalae</taxon>
        <taxon>rosids</taxon>
        <taxon>malvids</taxon>
        <taxon>Brassicales</taxon>
        <taxon>Brassicaceae</taxon>
        <taxon>Camelineae</taxon>
        <taxon>Arabidopsis</taxon>
    </lineage>
</organism>
<reference key="1">
    <citation type="online journal article" date="1995" name="Plant Gene Register">
        <title>Three eukaryotic release factor one (eRF1) homologs from Arabidopsis thaliana Columbia.</title>
        <authorList>
            <person name="Brown C.M."/>
            <person name="Quigley F.R."/>
            <person name="Miller W.A."/>
        </authorList>
        <locator>PGR95-123</locator>
    </citation>
    <scope>NUCLEOTIDE SEQUENCE [MRNA]</scope>
    <source>
        <strain>cv. Columbia</strain>
    </source>
</reference>
<reference key="2">
    <citation type="journal article" date="1996" name="Nucleic Acids Res.">
        <title>Sequence analysis of an 81 kb contig from Arabidopsis thaliana chromosome III.</title>
        <authorList>
            <person name="Quigley F."/>
            <person name="Dao P."/>
            <person name="Cottet A."/>
            <person name="Mache R."/>
        </authorList>
    </citation>
    <scope>NUCLEOTIDE SEQUENCE [GENOMIC DNA / MRNA]</scope>
    <source>
        <strain>cv. Columbia</strain>
        <tissue>Shoot</tissue>
    </source>
</reference>
<reference key="3">
    <citation type="journal article" date="2000" name="DNA Res.">
        <title>Structural analysis of Arabidopsis thaliana chromosome 3. I. Sequence features of the regions of 4,504,864 bp covered by sixty P1 and TAC clones.</title>
        <authorList>
            <person name="Sato S."/>
            <person name="Nakamura Y."/>
            <person name="Kaneko T."/>
            <person name="Katoh T."/>
            <person name="Asamizu E."/>
            <person name="Tabata S."/>
        </authorList>
    </citation>
    <scope>NUCLEOTIDE SEQUENCE [LARGE SCALE GENOMIC DNA]</scope>
    <source>
        <strain>cv. Columbia</strain>
    </source>
</reference>
<reference key="4">
    <citation type="journal article" date="2017" name="Plant J.">
        <title>Araport11: a complete reannotation of the Arabidopsis thaliana reference genome.</title>
        <authorList>
            <person name="Cheng C.Y."/>
            <person name="Krishnakumar V."/>
            <person name="Chan A.P."/>
            <person name="Thibaud-Nissen F."/>
            <person name="Schobel S."/>
            <person name="Town C.D."/>
        </authorList>
    </citation>
    <scope>GENOME REANNOTATION</scope>
    <source>
        <strain>cv. Columbia</strain>
    </source>
</reference>
<reference key="5">
    <citation type="journal article" date="2003" name="Science">
        <title>Empirical analysis of transcriptional activity in the Arabidopsis genome.</title>
        <authorList>
            <person name="Yamada K."/>
            <person name="Lim J."/>
            <person name="Dale J.M."/>
            <person name="Chen H."/>
            <person name="Shinn P."/>
            <person name="Palm C.J."/>
            <person name="Southwick A.M."/>
            <person name="Wu H.C."/>
            <person name="Kim C.J."/>
            <person name="Nguyen M."/>
            <person name="Pham P.K."/>
            <person name="Cheuk R.F."/>
            <person name="Karlin-Newmann G."/>
            <person name="Liu S.X."/>
            <person name="Lam B."/>
            <person name="Sakano H."/>
            <person name="Wu T."/>
            <person name="Yu G."/>
            <person name="Miranda M."/>
            <person name="Quach H.L."/>
            <person name="Tripp M."/>
            <person name="Chang C.H."/>
            <person name="Lee J.M."/>
            <person name="Toriumi M.J."/>
            <person name="Chan M.M."/>
            <person name="Tang C.C."/>
            <person name="Onodera C.S."/>
            <person name="Deng J.M."/>
            <person name="Akiyama K."/>
            <person name="Ansari Y."/>
            <person name="Arakawa T."/>
            <person name="Banh J."/>
            <person name="Banno F."/>
            <person name="Bowser L."/>
            <person name="Brooks S.Y."/>
            <person name="Carninci P."/>
            <person name="Chao Q."/>
            <person name="Choy N."/>
            <person name="Enju A."/>
            <person name="Goldsmith A.D."/>
            <person name="Gurjal M."/>
            <person name="Hansen N.F."/>
            <person name="Hayashizaki Y."/>
            <person name="Johnson-Hopson C."/>
            <person name="Hsuan V.W."/>
            <person name="Iida K."/>
            <person name="Karnes M."/>
            <person name="Khan S."/>
            <person name="Koesema E."/>
            <person name="Ishida J."/>
            <person name="Jiang P.X."/>
            <person name="Jones T."/>
            <person name="Kawai J."/>
            <person name="Kamiya A."/>
            <person name="Meyers C."/>
            <person name="Nakajima M."/>
            <person name="Narusaka M."/>
            <person name="Seki M."/>
            <person name="Sakurai T."/>
            <person name="Satou M."/>
            <person name="Tamse R."/>
            <person name="Vaysberg M."/>
            <person name="Wallender E.K."/>
            <person name="Wong C."/>
            <person name="Yamamura Y."/>
            <person name="Yuan S."/>
            <person name="Shinozaki K."/>
            <person name="Davis R.W."/>
            <person name="Theologis A."/>
            <person name="Ecker J.R."/>
        </authorList>
    </citation>
    <scope>NUCLEOTIDE SEQUENCE [LARGE SCALE MRNA]</scope>
    <source>
        <strain>cv. Columbia</strain>
    </source>
</reference>
<reference key="6">
    <citation type="journal article" date="2004" name="Gene">
        <title>Translation termination in Arabidopsis thaliana: characterisation of three versions of release factor 1.</title>
        <authorList>
            <person name="Chapman B."/>
            <person name="Brown C."/>
        </authorList>
    </citation>
    <scope>FUNCTION</scope>
    <scope>MUTAGENESIS OF GLY-181</scope>
</reference>
<reference key="7">
    <citation type="journal article" date="2005" name="Plant Physiol.">
        <title>Cosuppression of eukaryotic release factor 1-1 in Arabidopsis affects cell elongation and radial cell division.</title>
        <authorList>
            <person name="Petsch K.A."/>
            <person name="Mylne J."/>
            <person name="Botella J.R."/>
        </authorList>
    </citation>
    <scope>FUNCTION</scope>
</reference>
<dbReference type="EMBL" id="X69375">
    <property type="protein sequence ID" value="CAA49172.1"/>
    <property type="molecule type" value="Genomic_DNA"/>
</dbReference>
<dbReference type="EMBL" id="X98130">
    <property type="protein sequence ID" value="CAA66813.1"/>
    <property type="molecule type" value="Genomic_DNA"/>
</dbReference>
<dbReference type="EMBL" id="X97486">
    <property type="protein sequence ID" value="CAA66118.1"/>
    <property type="molecule type" value="mRNA"/>
</dbReference>
<dbReference type="EMBL" id="AB026648">
    <property type="protein sequence ID" value="BAB01727.1"/>
    <property type="molecule type" value="Genomic_DNA"/>
</dbReference>
<dbReference type="EMBL" id="AB028611">
    <property type="protein sequence ID" value="BAB01727.1"/>
    <property type="status" value="JOINED"/>
    <property type="molecule type" value="Genomic_DNA"/>
</dbReference>
<dbReference type="EMBL" id="CP002686">
    <property type="protein sequence ID" value="AEE77187.1"/>
    <property type="molecule type" value="Genomic_DNA"/>
</dbReference>
<dbReference type="EMBL" id="AY050352">
    <property type="protein sequence ID" value="AAK91369.1"/>
    <property type="molecule type" value="mRNA"/>
</dbReference>
<dbReference type="EMBL" id="AY116942">
    <property type="protein sequence ID" value="AAM51576.1"/>
    <property type="molecule type" value="mRNA"/>
</dbReference>
<dbReference type="PIR" id="S31328">
    <property type="entry name" value="S31328"/>
</dbReference>
<dbReference type="RefSeq" id="NP_189295.3">
    <property type="nucleotide sequence ID" value="NM_113572.4"/>
</dbReference>
<dbReference type="SMR" id="P35614"/>
<dbReference type="BioGRID" id="7603">
    <property type="interactions" value="2"/>
</dbReference>
<dbReference type="FunCoup" id="P35614">
    <property type="interactions" value="4833"/>
</dbReference>
<dbReference type="STRING" id="3702.P35614"/>
<dbReference type="iPTMnet" id="P35614"/>
<dbReference type="PaxDb" id="3702-AT3G26618.1"/>
<dbReference type="ProteomicsDB" id="221861"/>
<dbReference type="EnsemblPlants" id="AT3G26618.1">
    <property type="protein sequence ID" value="AT3G26618.1"/>
    <property type="gene ID" value="AT3G26618"/>
</dbReference>
<dbReference type="GeneID" id="822273"/>
<dbReference type="Gramene" id="AT3G26618.1">
    <property type="protein sequence ID" value="AT3G26618.1"/>
    <property type="gene ID" value="AT3G26618"/>
</dbReference>
<dbReference type="KEGG" id="ath:AT3G26618"/>
<dbReference type="Araport" id="AT3G26618"/>
<dbReference type="TAIR" id="AT3G26618">
    <property type="gene designation" value="ERF1-3"/>
</dbReference>
<dbReference type="eggNOG" id="KOG0688">
    <property type="taxonomic scope" value="Eukaryota"/>
</dbReference>
<dbReference type="HOGENOM" id="CLU_035759_2_1_1"/>
<dbReference type="InParanoid" id="P35614"/>
<dbReference type="OMA" id="WEALEVM"/>
<dbReference type="PhylomeDB" id="P35614"/>
<dbReference type="CD-CODE" id="4299E36E">
    <property type="entry name" value="Nucleolus"/>
</dbReference>
<dbReference type="PRO" id="PR:P35614"/>
<dbReference type="Proteomes" id="UP000006548">
    <property type="component" value="Chromosome 3"/>
</dbReference>
<dbReference type="ExpressionAtlas" id="P35614">
    <property type="expression patterns" value="baseline and differential"/>
</dbReference>
<dbReference type="GO" id="GO:0005829">
    <property type="term" value="C:cytosol"/>
    <property type="evidence" value="ECO:0007005"/>
    <property type="project" value="TAIR"/>
</dbReference>
<dbReference type="GO" id="GO:0003747">
    <property type="term" value="F:translation release factor activity"/>
    <property type="evidence" value="ECO:0000316"/>
    <property type="project" value="TAIR"/>
</dbReference>
<dbReference type="GO" id="GO:0006415">
    <property type="term" value="P:translational termination"/>
    <property type="evidence" value="ECO:0000316"/>
    <property type="project" value="TAIR"/>
</dbReference>
<dbReference type="FunFam" id="3.30.420.60:FF:000001">
    <property type="entry name" value="Eukaryotic peptide chain release factor subunit 1"/>
    <property type="match status" value="1"/>
</dbReference>
<dbReference type="FunFam" id="3.30.960.10:FF:000001">
    <property type="entry name" value="Eukaryotic peptide chain release factor subunit 1"/>
    <property type="match status" value="1"/>
</dbReference>
<dbReference type="FunFam" id="3.30.1330.30:FF:000006">
    <property type="entry name" value="Peptide chain release factor subunit 1"/>
    <property type="match status" value="1"/>
</dbReference>
<dbReference type="Gene3D" id="3.30.1330.30">
    <property type="match status" value="1"/>
</dbReference>
<dbReference type="Gene3D" id="3.30.960.10">
    <property type="entry name" value="eRF1 domain 1"/>
    <property type="match status" value="1"/>
</dbReference>
<dbReference type="Gene3D" id="3.30.420.60">
    <property type="entry name" value="eRF1 domain 2"/>
    <property type="match status" value="1"/>
</dbReference>
<dbReference type="InterPro" id="IPR042226">
    <property type="entry name" value="eFR1_2_sf"/>
</dbReference>
<dbReference type="InterPro" id="IPR005140">
    <property type="entry name" value="eRF1_1_Pelota"/>
</dbReference>
<dbReference type="InterPro" id="IPR024049">
    <property type="entry name" value="eRF1_1_sf"/>
</dbReference>
<dbReference type="InterPro" id="IPR005141">
    <property type="entry name" value="eRF1_2"/>
</dbReference>
<dbReference type="InterPro" id="IPR005142">
    <property type="entry name" value="eRF1_3"/>
</dbReference>
<dbReference type="InterPro" id="IPR004403">
    <property type="entry name" value="Peptide_chain-rel_eRF1/aRF1"/>
</dbReference>
<dbReference type="InterPro" id="IPR029064">
    <property type="entry name" value="Ribosomal_eL30-like_sf"/>
</dbReference>
<dbReference type="NCBIfam" id="TIGR03676">
    <property type="entry name" value="aRF1_eRF1"/>
    <property type="match status" value="1"/>
</dbReference>
<dbReference type="PANTHER" id="PTHR10113">
    <property type="entry name" value="PEPTIDE CHAIN RELEASE FACTOR SUBUNIT 1"/>
    <property type="match status" value="1"/>
</dbReference>
<dbReference type="Pfam" id="PF03463">
    <property type="entry name" value="eRF1_1"/>
    <property type="match status" value="1"/>
</dbReference>
<dbReference type="Pfam" id="PF03464">
    <property type="entry name" value="eRF1_2"/>
    <property type="match status" value="1"/>
</dbReference>
<dbReference type="Pfam" id="PF03465">
    <property type="entry name" value="eRF1_3"/>
    <property type="match status" value="1"/>
</dbReference>
<dbReference type="SMART" id="SM01194">
    <property type="entry name" value="eRF1_1"/>
    <property type="match status" value="1"/>
</dbReference>
<dbReference type="SUPFAM" id="SSF55315">
    <property type="entry name" value="L30e-like"/>
    <property type="match status" value="1"/>
</dbReference>
<dbReference type="SUPFAM" id="SSF55481">
    <property type="entry name" value="N-terminal domain of eukaryotic peptide chain release factor subunit 1, ERF1"/>
    <property type="match status" value="1"/>
</dbReference>
<dbReference type="SUPFAM" id="SSF53137">
    <property type="entry name" value="Translational machinery components"/>
    <property type="match status" value="1"/>
</dbReference>
<evidence type="ECO:0000250" key="1">
    <source>
        <dbReference type="UniProtKB" id="Q9LPV8"/>
    </source>
</evidence>
<evidence type="ECO:0000269" key="2">
    <source>
    </source>
</evidence>
<evidence type="ECO:0000269" key="3">
    <source>
    </source>
</evidence>
<evidence type="ECO:0000303" key="4">
    <source>
    </source>
</evidence>
<evidence type="ECO:0000305" key="5"/>
<gene>
    <name type="primary">ERF1-3</name>
    <name type="ordered locus">At3g26618</name>
    <name type="ORF">MFE16.17</name>
</gene>
<feature type="initiator methionine" description="Removed" evidence="1">
    <location>
        <position position="1"/>
    </location>
</feature>
<feature type="chain" id="PRO_0000143164" description="Eukaryotic peptide chain release factor subunit 1-3">
    <location>
        <begin position="2"/>
        <end position="435"/>
    </location>
</feature>
<feature type="modified residue" description="N-acetylalanine" evidence="1">
    <location>
        <position position="2"/>
    </location>
</feature>
<feature type="mutagenesis site" description="Loss of peptidyl-tRNA hydrolytic activity." evidence="2">
    <original>G</original>
    <variation>A</variation>
    <location>
        <position position="181"/>
    </location>
</feature>
<name>ERF1Z_ARATH</name>
<keyword id="KW-0007">Acetylation</keyword>
<keyword id="KW-0963">Cytoplasm</keyword>
<keyword id="KW-0341">Growth regulation</keyword>
<keyword id="KW-0648">Protein biosynthesis</keyword>
<keyword id="KW-1185">Reference proteome</keyword>
<proteinExistence type="evidence at protein level"/>
<comment type="function">
    <text evidence="3 4">Directs the termination of nascent peptide synthesis (translation) in response to the termination codons UAA, UAG and UGA (PubMed:15474304). Modulates plant growth and development (PubMed:16113224).</text>
</comment>
<comment type="subunit">
    <text>Heterodimer of two subunits, one of which binds GTP.</text>
</comment>
<comment type="subcellular location">
    <subcellularLocation>
        <location>Cytoplasm</location>
    </subcellularLocation>
</comment>
<comment type="similarity">
    <text evidence="5">Belongs to the eukaryotic release factor 1 family.</text>
</comment>